<reference key="1">
    <citation type="journal article" date="2008" name="PLoS Genet.">
        <title>Complete genome sequence of the complex carbohydrate-degrading marine bacterium, Saccharophagus degradans strain 2-40 T.</title>
        <authorList>
            <person name="Weiner R.M."/>
            <person name="Taylor L.E. II"/>
            <person name="Henrissat B."/>
            <person name="Hauser L."/>
            <person name="Land M."/>
            <person name="Coutinho P.M."/>
            <person name="Rancurel C."/>
            <person name="Saunders E.H."/>
            <person name="Longmire A.G."/>
            <person name="Zhang H."/>
            <person name="Bayer E.A."/>
            <person name="Gilbert H.J."/>
            <person name="Larimer F."/>
            <person name="Zhulin I.B."/>
            <person name="Ekborg N.A."/>
            <person name="Lamed R."/>
            <person name="Richardson P.M."/>
            <person name="Borovok I."/>
            <person name="Hutcheson S."/>
        </authorList>
    </citation>
    <scope>NUCLEOTIDE SEQUENCE [LARGE SCALE GENOMIC DNA]</scope>
    <source>
        <strain>2-40 / ATCC 43961 / DSM 17024</strain>
    </source>
</reference>
<keyword id="KW-0012">Acyltransferase</keyword>
<keyword id="KW-0028">Amino-acid biosynthesis</keyword>
<keyword id="KW-0963">Cytoplasm</keyword>
<keyword id="KW-0486">Methionine biosynthesis</keyword>
<keyword id="KW-1185">Reference proteome</keyword>
<keyword id="KW-0808">Transferase</keyword>
<sequence>MPAPFPEDSVGLVTPQLFHFDQPLALANGRSLDSYELMVETYGELNAEKSNGILICHALSGSHHVAGYHSEDDKKPGWWEHYVGPGKPIDTNRFYVVCMNNIGGCHGSTGPQSINPATGKPWGSSFPFLRVRDWVETQVRLADRLGINQWAAVVGGSLGGMQAMRWALEHPNRLRHCVVIASAMNLTAQNIAFNETARQAIQSDPNFFNGDYLAQSTLPKRGLSVARMIGHITYLSDDGMGKKFGRELRSGSFDRGNDQLVEFQIESYLRYQGSTFSEVFDANTYILMTRALDYFDLAREYNGDAAEAFKQASCKFLVVSFTSDWRFAPERSREIVTALMRANRDVVYGEIDSVHGHDAFLVPNQLRYWELFSAYMNRVEV</sequence>
<comment type="function">
    <text evidence="1">Transfers a succinyl group from succinyl-CoA to L-homoserine, forming succinyl-L-homoserine.</text>
</comment>
<comment type="catalytic activity">
    <reaction evidence="1">
        <text>L-homoserine + succinyl-CoA = O-succinyl-L-homoserine + CoA</text>
        <dbReference type="Rhea" id="RHEA:22008"/>
        <dbReference type="ChEBI" id="CHEBI:57287"/>
        <dbReference type="ChEBI" id="CHEBI:57292"/>
        <dbReference type="ChEBI" id="CHEBI:57476"/>
        <dbReference type="ChEBI" id="CHEBI:57661"/>
        <dbReference type="EC" id="2.3.1.46"/>
    </reaction>
</comment>
<comment type="pathway">
    <text evidence="1">Amino-acid biosynthesis; L-methionine biosynthesis via de novo pathway; O-succinyl-L-homoserine from L-homoserine: step 1/1.</text>
</comment>
<comment type="subunit">
    <text evidence="1">Homodimer.</text>
</comment>
<comment type="subcellular location">
    <subcellularLocation>
        <location evidence="1">Cytoplasm</location>
    </subcellularLocation>
</comment>
<comment type="similarity">
    <text evidence="1">Belongs to the AB hydrolase superfamily. MetX family.</text>
</comment>
<organism>
    <name type="scientific">Saccharophagus degradans (strain 2-40 / ATCC 43961 / DSM 17024)</name>
    <dbReference type="NCBI Taxonomy" id="203122"/>
    <lineage>
        <taxon>Bacteria</taxon>
        <taxon>Pseudomonadati</taxon>
        <taxon>Pseudomonadota</taxon>
        <taxon>Gammaproteobacteria</taxon>
        <taxon>Cellvibrionales</taxon>
        <taxon>Cellvibrionaceae</taxon>
        <taxon>Saccharophagus</taxon>
    </lineage>
</organism>
<dbReference type="EC" id="2.3.1.46" evidence="1"/>
<dbReference type="EMBL" id="CP000282">
    <property type="protein sequence ID" value="ABD82899.1"/>
    <property type="molecule type" value="Genomic_DNA"/>
</dbReference>
<dbReference type="RefSeq" id="WP_011470114.1">
    <property type="nucleotide sequence ID" value="NC_007912.1"/>
</dbReference>
<dbReference type="SMR" id="Q21EI0"/>
<dbReference type="STRING" id="203122.Sde_3644"/>
<dbReference type="ESTHER" id="sacd2-q21ei0">
    <property type="family name" value="Homoserine_transacetylase"/>
</dbReference>
<dbReference type="GeneID" id="98615253"/>
<dbReference type="KEGG" id="sde:Sde_3644"/>
<dbReference type="eggNOG" id="COG2021">
    <property type="taxonomic scope" value="Bacteria"/>
</dbReference>
<dbReference type="HOGENOM" id="CLU_028760_1_2_6"/>
<dbReference type="OrthoDB" id="9800754at2"/>
<dbReference type="UniPathway" id="UPA00051">
    <property type="reaction ID" value="UER00075"/>
</dbReference>
<dbReference type="Proteomes" id="UP000001947">
    <property type="component" value="Chromosome"/>
</dbReference>
<dbReference type="GO" id="GO:0005737">
    <property type="term" value="C:cytoplasm"/>
    <property type="evidence" value="ECO:0007669"/>
    <property type="project" value="UniProtKB-SubCell"/>
</dbReference>
<dbReference type="GO" id="GO:0004414">
    <property type="term" value="F:homoserine O-acetyltransferase activity"/>
    <property type="evidence" value="ECO:0007669"/>
    <property type="project" value="TreeGrafter"/>
</dbReference>
<dbReference type="GO" id="GO:0008899">
    <property type="term" value="F:homoserine O-succinyltransferase activity"/>
    <property type="evidence" value="ECO:0007669"/>
    <property type="project" value="UniProtKB-UniRule"/>
</dbReference>
<dbReference type="GO" id="GO:0009092">
    <property type="term" value="P:homoserine metabolic process"/>
    <property type="evidence" value="ECO:0007669"/>
    <property type="project" value="TreeGrafter"/>
</dbReference>
<dbReference type="GO" id="GO:0009086">
    <property type="term" value="P:methionine biosynthetic process"/>
    <property type="evidence" value="ECO:0007669"/>
    <property type="project" value="UniProtKB-UniRule"/>
</dbReference>
<dbReference type="FunFam" id="1.10.1740.110:FF:000001">
    <property type="entry name" value="Homoserine O-acetyltransferase"/>
    <property type="match status" value="1"/>
</dbReference>
<dbReference type="Gene3D" id="1.10.1740.110">
    <property type="match status" value="1"/>
</dbReference>
<dbReference type="Gene3D" id="3.40.50.1820">
    <property type="entry name" value="alpha/beta hydrolase"/>
    <property type="match status" value="1"/>
</dbReference>
<dbReference type="HAMAP" id="MF_00296">
    <property type="entry name" value="MetX_acyltransf"/>
    <property type="match status" value="1"/>
</dbReference>
<dbReference type="InterPro" id="IPR000073">
    <property type="entry name" value="AB_hydrolase_1"/>
</dbReference>
<dbReference type="InterPro" id="IPR029058">
    <property type="entry name" value="AB_hydrolase_fold"/>
</dbReference>
<dbReference type="InterPro" id="IPR008220">
    <property type="entry name" value="HAT_MetX-like"/>
</dbReference>
<dbReference type="NCBIfam" id="TIGR01392">
    <property type="entry name" value="homoserO_Ac_trn"/>
    <property type="match status" value="1"/>
</dbReference>
<dbReference type="NCBIfam" id="NF001209">
    <property type="entry name" value="PRK00175.1"/>
    <property type="match status" value="1"/>
</dbReference>
<dbReference type="PANTHER" id="PTHR32268">
    <property type="entry name" value="HOMOSERINE O-ACETYLTRANSFERASE"/>
    <property type="match status" value="1"/>
</dbReference>
<dbReference type="PANTHER" id="PTHR32268:SF11">
    <property type="entry name" value="HOMOSERINE O-ACETYLTRANSFERASE"/>
    <property type="match status" value="1"/>
</dbReference>
<dbReference type="Pfam" id="PF00561">
    <property type="entry name" value="Abhydrolase_1"/>
    <property type="match status" value="1"/>
</dbReference>
<dbReference type="PIRSF" id="PIRSF000443">
    <property type="entry name" value="Homoser_Ac_trans"/>
    <property type="match status" value="1"/>
</dbReference>
<dbReference type="SUPFAM" id="SSF53474">
    <property type="entry name" value="alpha/beta-Hydrolases"/>
    <property type="match status" value="1"/>
</dbReference>
<name>METXS_SACD2</name>
<accession>Q21EI0</accession>
<evidence type="ECO:0000255" key="1">
    <source>
        <dbReference type="HAMAP-Rule" id="MF_00296"/>
    </source>
</evidence>
<protein>
    <recommendedName>
        <fullName evidence="1">Homoserine O-succinyltransferase</fullName>
        <shortName evidence="1">HST</shortName>
        <ecNumber evidence="1">2.3.1.46</ecNumber>
    </recommendedName>
    <alternativeName>
        <fullName evidence="1">Homoserine transsuccinylase</fullName>
        <shortName evidence="1">HTS</shortName>
    </alternativeName>
</protein>
<gene>
    <name evidence="1" type="primary">metXS</name>
    <name type="ordered locus">Sde_3644</name>
</gene>
<feature type="chain" id="PRO_1000115235" description="Homoserine O-succinyltransferase">
    <location>
        <begin position="1"/>
        <end position="381"/>
    </location>
</feature>
<feature type="domain" description="AB hydrolase-1" evidence="1">
    <location>
        <begin position="53"/>
        <end position="361"/>
    </location>
</feature>
<feature type="active site" description="Nucleophile" evidence="1">
    <location>
        <position position="157"/>
    </location>
</feature>
<feature type="active site" evidence="1">
    <location>
        <position position="324"/>
    </location>
</feature>
<feature type="active site" evidence="1">
    <location>
        <position position="357"/>
    </location>
</feature>
<feature type="binding site" evidence="1">
    <location>
        <position position="227"/>
    </location>
    <ligand>
        <name>substrate</name>
    </ligand>
</feature>
<feature type="binding site" evidence="1">
    <location>
        <position position="358"/>
    </location>
    <ligand>
        <name>substrate</name>
    </ligand>
</feature>
<feature type="site" description="Important for acyl-CoA specificity" evidence="1">
    <location>
        <position position="326"/>
    </location>
</feature>
<proteinExistence type="inferred from homology"/>